<sequence length="113" mass="13334">MVRDIGLRIQPPAEKCDDPKCPWHGHLKIHGRVFEGIVVSDKPRKTVTVERQYYHYLKKYERYELRRSRIHAHNPPCINAKVGDRVLIAETRPLSKTKHFVVVAVLERAEERR</sequence>
<organism>
    <name type="scientific">Pyrococcus abyssi (strain GE5 / Orsay)</name>
    <dbReference type="NCBI Taxonomy" id="272844"/>
    <lineage>
        <taxon>Archaea</taxon>
        <taxon>Methanobacteriati</taxon>
        <taxon>Methanobacteriota</taxon>
        <taxon>Thermococci</taxon>
        <taxon>Thermococcales</taxon>
        <taxon>Thermococcaceae</taxon>
        <taxon>Pyrococcus</taxon>
    </lineage>
</organism>
<comment type="function">
    <text evidence="1">One of the primary rRNA binding proteins, it binds specifically to the 5'-end of 16S ribosomal RNA.</text>
</comment>
<comment type="subunit">
    <text evidence="1">Part of the 30S ribosomal subunit.</text>
</comment>
<comment type="similarity">
    <text evidence="1">Belongs to the universal ribosomal protein uS17 family.</text>
</comment>
<comment type="sequence caution" evidence="2">
    <conflict type="erroneous initiation">
        <sequence resource="EMBL-CDS" id="CAB49254"/>
    </conflict>
    <text>Extended N-terminus.</text>
</comment>
<name>RS17_PYRAB</name>
<proteinExistence type="evidence at protein level"/>
<dbReference type="EMBL" id="AJ248284">
    <property type="protein sequence ID" value="CAB49254.1"/>
    <property type="status" value="ALT_INIT"/>
    <property type="molecule type" value="Genomic_DNA"/>
</dbReference>
<dbReference type="EMBL" id="HE613800">
    <property type="protein sequence ID" value="CCE69709.1"/>
    <property type="molecule type" value="Genomic_DNA"/>
</dbReference>
<dbReference type="PIR" id="G75146">
    <property type="entry name" value="G75146"/>
</dbReference>
<dbReference type="RefSeq" id="WP_010867454.1">
    <property type="nucleotide sequence ID" value="NC_000868.1"/>
</dbReference>
<dbReference type="PDB" id="6SW9">
    <property type="method" value="EM"/>
    <property type="resolution" value="4.20 A"/>
    <property type="chains" value="R=1-113"/>
</dbReference>
<dbReference type="PDB" id="6SWC">
    <property type="method" value="EM"/>
    <property type="resolution" value="3.30 A"/>
    <property type="chains" value="R=1-113"/>
</dbReference>
<dbReference type="PDB" id="6SWD">
    <property type="method" value="EM"/>
    <property type="resolution" value="3.20 A"/>
    <property type="chains" value="R=1-113"/>
</dbReference>
<dbReference type="PDB" id="7ZAG">
    <property type="method" value="EM"/>
    <property type="resolution" value="2.77 A"/>
    <property type="chains" value="R=1-113"/>
</dbReference>
<dbReference type="PDB" id="7ZAH">
    <property type="method" value="EM"/>
    <property type="resolution" value="2.70 A"/>
    <property type="chains" value="R=1-113"/>
</dbReference>
<dbReference type="PDB" id="7ZAI">
    <property type="method" value="EM"/>
    <property type="resolution" value="2.60 A"/>
    <property type="chains" value="R=1-113"/>
</dbReference>
<dbReference type="PDB" id="7ZHG">
    <property type="method" value="EM"/>
    <property type="resolution" value="2.25 A"/>
    <property type="chains" value="R=1-113"/>
</dbReference>
<dbReference type="PDBsum" id="6SW9"/>
<dbReference type="PDBsum" id="6SWC"/>
<dbReference type="PDBsum" id="6SWD"/>
<dbReference type="PDBsum" id="7ZAG"/>
<dbReference type="PDBsum" id="7ZAH"/>
<dbReference type="PDBsum" id="7ZAI"/>
<dbReference type="PDBsum" id="7ZHG"/>
<dbReference type="EMDB" id="EMD-10320"/>
<dbReference type="EMDB" id="EMD-10322"/>
<dbReference type="EMDB" id="EMD-10323"/>
<dbReference type="EMDB" id="EMD-14579"/>
<dbReference type="EMDB" id="EMD-14580"/>
<dbReference type="EMDB" id="EMD-14581"/>
<dbReference type="EMDB" id="EMD-14731"/>
<dbReference type="EMDB" id="EMD-8148"/>
<dbReference type="SMR" id="Q9V1U5"/>
<dbReference type="STRING" id="272844.PAB2127"/>
<dbReference type="KEGG" id="pab:PAB2127"/>
<dbReference type="PATRIC" id="fig|272844.11.peg.353"/>
<dbReference type="eggNOG" id="arCOG04096">
    <property type="taxonomic scope" value="Archaea"/>
</dbReference>
<dbReference type="HOGENOM" id="CLU_073626_0_3_2"/>
<dbReference type="OrthoDB" id="10698at2157"/>
<dbReference type="Proteomes" id="UP000000810">
    <property type="component" value="Chromosome"/>
</dbReference>
<dbReference type="Proteomes" id="UP000009139">
    <property type="component" value="Chromosome"/>
</dbReference>
<dbReference type="GO" id="GO:0022627">
    <property type="term" value="C:cytosolic small ribosomal subunit"/>
    <property type="evidence" value="ECO:0007669"/>
    <property type="project" value="TreeGrafter"/>
</dbReference>
<dbReference type="GO" id="GO:0019843">
    <property type="term" value="F:rRNA binding"/>
    <property type="evidence" value="ECO:0007669"/>
    <property type="project" value="UniProtKB-UniRule"/>
</dbReference>
<dbReference type="GO" id="GO:0003735">
    <property type="term" value="F:structural constituent of ribosome"/>
    <property type="evidence" value="ECO:0007669"/>
    <property type="project" value="InterPro"/>
</dbReference>
<dbReference type="GO" id="GO:0006412">
    <property type="term" value="P:translation"/>
    <property type="evidence" value="ECO:0007669"/>
    <property type="project" value="UniProtKB-UniRule"/>
</dbReference>
<dbReference type="CDD" id="cd00364">
    <property type="entry name" value="Ribosomal_uS17"/>
    <property type="match status" value="1"/>
</dbReference>
<dbReference type="FunFam" id="2.40.50.1000:FF:000005">
    <property type="entry name" value="30S ribosomal protein S17"/>
    <property type="match status" value="1"/>
</dbReference>
<dbReference type="Gene3D" id="2.40.50.1000">
    <property type="match status" value="1"/>
</dbReference>
<dbReference type="HAMAP" id="MF_01345_A">
    <property type="entry name" value="Ribosomal_uS17_A"/>
    <property type="match status" value="1"/>
</dbReference>
<dbReference type="InterPro" id="IPR012340">
    <property type="entry name" value="NA-bd_OB-fold"/>
</dbReference>
<dbReference type="InterPro" id="IPR000266">
    <property type="entry name" value="Ribosomal_uS17"/>
</dbReference>
<dbReference type="InterPro" id="IPR028333">
    <property type="entry name" value="Ribosomal_uS17_arc/euk"/>
</dbReference>
<dbReference type="InterPro" id="IPR019978">
    <property type="entry name" value="Ribosomal_uS17_archaeal"/>
</dbReference>
<dbReference type="InterPro" id="IPR019979">
    <property type="entry name" value="Ribosomal_uS17_CS"/>
</dbReference>
<dbReference type="NCBIfam" id="NF006345">
    <property type="entry name" value="PRK08572.1"/>
    <property type="match status" value="1"/>
</dbReference>
<dbReference type="NCBIfam" id="TIGR03630">
    <property type="entry name" value="uS17_arch"/>
    <property type="match status" value="1"/>
</dbReference>
<dbReference type="PANTHER" id="PTHR10744">
    <property type="entry name" value="40S RIBOSOMAL PROTEIN S11 FAMILY MEMBER"/>
    <property type="match status" value="1"/>
</dbReference>
<dbReference type="PANTHER" id="PTHR10744:SF9">
    <property type="entry name" value="40S RIBOSOMAL PROTEIN S11-RELATED"/>
    <property type="match status" value="1"/>
</dbReference>
<dbReference type="Pfam" id="PF00366">
    <property type="entry name" value="Ribosomal_S17"/>
    <property type="match status" value="1"/>
</dbReference>
<dbReference type="PRINTS" id="PR00973">
    <property type="entry name" value="RIBOSOMALS17"/>
</dbReference>
<dbReference type="SUPFAM" id="SSF50249">
    <property type="entry name" value="Nucleic acid-binding proteins"/>
    <property type="match status" value="1"/>
</dbReference>
<dbReference type="PROSITE" id="PS00056">
    <property type="entry name" value="RIBOSOMAL_S17"/>
    <property type="match status" value="1"/>
</dbReference>
<keyword id="KW-0002">3D-structure</keyword>
<keyword id="KW-0687">Ribonucleoprotein</keyword>
<keyword id="KW-0689">Ribosomal protein</keyword>
<keyword id="KW-0694">RNA-binding</keyword>
<keyword id="KW-0699">rRNA-binding</keyword>
<gene>
    <name evidence="1" type="primary">rps17</name>
    <name type="ordered locus">PYRAB03320</name>
    <name type="ORF">PAB2127</name>
</gene>
<accession>Q9V1U5</accession>
<accession>G8ZHW6</accession>
<reference key="1">
    <citation type="journal article" date="2003" name="Mol. Microbiol.">
        <title>An integrated analysis of the genome of the hyperthermophilic archaeon Pyrococcus abyssi.</title>
        <authorList>
            <person name="Cohen G.N."/>
            <person name="Barbe V."/>
            <person name="Flament D."/>
            <person name="Galperin M."/>
            <person name="Heilig R."/>
            <person name="Lecompte O."/>
            <person name="Poch O."/>
            <person name="Prieur D."/>
            <person name="Querellou J."/>
            <person name="Ripp R."/>
            <person name="Thierry J.-C."/>
            <person name="Van der Oost J."/>
            <person name="Weissenbach J."/>
            <person name="Zivanovic Y."/>
            <person name="Forterre P."/>
        </authorList>
    </citation>
    <scope>NUCLEOTIDE SEQUENCE [LARGE SCALE GENOMIC DNA]</scope>
    <source>
        <strain>GE5 / Orsay</strain>
    </source>
</reference>
<reference key="2">
    <citation type="journal article" date="2012" name="Curr. Microbiol.">
        <title>Re-annotation of two hyperthermophilic archaea Pyrococcus abyssi GE5 and Pyrococcus furiosus DSM 3638.</title>
        <authorList>
            <person name="Gao J."/>
            <person name="Wang J."/>
        </authorList>
    </citation>
    <scope>GENOME REANNOTATION</scope>
    <source>
        <strain>GE5 / Orsay</strain>
    </source>
</reference>
<feature type="chain" id="PRO_0000128502" description="Small ribosomal subunit protein uS17">
    <location>
        <begin position="1"/>
        <end position="113"/>
    </location>
</feature>
<feature type="turn" evidence="3">
    <location>
        <begin position="22"/>
        <end position="24"/>
    </location>
</feature>
<feature type="strand" evidence="3">
    <location>
        <begin position="33"/>
        <end position="40"/>
    </location>
</feature>
<feature type="strand" evidence="3">
    <location>
        <begin position="46"/>
        <end position="57"/>
    </location>
</feature>
<feature type="turn" evidence="3">
    <location>
        <begin position="58"/>
        <end position="61"/>
    </location>
</feature>
<feature type="strand" evidence="3">
    <location>
        <begin position="62"/>
        <end position="73"/>
    </location>
</feature>
<feature type="turn" evidence="3">
    <location>
        <begin position="76"/>
        <end position="78"/>
    </location>
</feature>
<feature type="strand" evidence="3">
    <location>
        <begin position="85"/>
        <end position="90"/>
    </location>
</feature>
<feature type="strand" evidence="3">
    <location>
        <begin position="95"/>
        <end position="97"/>
    </location>
</feature>
<feature type="strand" evidence="3">
    <location>
        <begin position="100"/>
        <end position="107"/>
    </location>
</feature>
<protein>
    <recommendedName>
        <fullName evidence="1">Small ribosomal subunit protein uS17</fullName>
    </recommendedName>
    <alternativeName>
        <fullName evidence="2">30S ribosomal protein S17</fullName>
    </alternativeName>
</protein>
<evidence type="ECO:0000255" key="1">
    <source>
        <dbReference type="HAMAP-Rule" id="MF_01345"/>
    </source>
</evidence>
<evidence type="ECO:0000305" key="2"/>
<evidence type="ECO:0007829" key="3">
    <source>
        <dbReference type="PDB" id="7ZHG"/>
    </source>
</evidence>